<protein>
    <recommendedName>
        <fullName evidence="3">NmrA-like family domain-containing oxidoreductase flvB</fullName>
        <ecNumber evidence="2">1.-.-.-</ecNumber>
    </recommendedName>
    <alternativeName>
        <fullName evidence="3">Flavunoidine biosynthesis cluster protein B</fullName>
    </alternativeName>
</protein>
<keyword id="KW-0521">NADP</keyword>
<keyword id="KW-0560">Oxidoreductase</keyword>
<proteinExistence type="evidence at protein level"/>
<gene>
    <name evidence="3" type="primary">flvB</name>
    <name type="ORF">AFLA_135420</name>
</gene>
<comment type="function">
    <text evidence="2">NmrA-like family domain-containing oxidoreductase; part of the gene cluster that mediates the biosynthesis of flavunoidine, an alkaloidal terpenoid with a tetracyclic cage-like core connected to dimethylcadaverine via a C-N bond and acylated with 5,5-dimethyl-L-pipecolate (PubMed:31885262). The tetracyclic core is synthesized by the terpene cyclase flvE and the cytochrome P450 monooxygenase flvD (PubMed:31885262). The terpene cyclase flvE catalyzes the cyclization of farnesyl pyrophosphate (FPP) to form (1R,4R,5S)-(+)-acoradiene and the cytochrome P450 monooxygenase flvD is then responsible for oxidative conversion of (1R,4R,5S)-(+)-acoradiene into the tetracyclic cage present in the final product flavunoidine (PubMed:31885262). In parallel, the N-methyltransferase flvH dimethylates L-lysine to give N,N-dimethyl-L-Lysin which is decarboxylated by flvG to afford dimethylcadaverine (PubMed:31885262). The terpene cyclase-like protein flvF is the enzyme that attaches the dimethylcadaverine precusor at the C-7 of the tetracyclic cage to yield pre-flavunoidine (PubMed:31885262). The cytochrome monooxygenase flvC hydroxylates the C-10 position of pre-flavunoidine whereas the NRPS flvI acylates the terpenoid core at the hydroxylated C-10 with dimethylpipecolate to yield final flavunoidine (PubMed:31885262). The bifunctional enzyme flvA and the dehydrogenase flvB are responsible for the synthesis of the dimethylpipecolate precursor (PubMed:31885262). The PLP-dependent lyase domain of flvA might use L-O-acetyl-homoserine and alpha-keto-isovalerate to form an intermediary ketone that can cyclize intramolecularly to yield an imine (PubMed:31885262). The imine can be reduced by flvB to yield the 6-carboxylated pipecolate (PubMed:31885262). The C-terminal alpha-KG-dependent oxygenase domain of flvA is then proposed to catalyze the decarboxylation to yield dimethylpipecolate (PubMed:31885262).</text>
</comment>
<comment type="catalytic activity">
    <reaction evidence="2">
        <text>(2S)-5,5-dimethyl-2,3,4,5-tetrahydropyridine-2,6-dicarboxylate + NADPH + 2 H(+) = (6S)-3,3-dimethylpiperidine-2,6-dicarboxylate + NADP(+)</text>
        <dbReference type="Rhea" id="RHEA:76579"/>
        <dbReference type="ChEBI" id="CHEBI:15378"/>
        <dbReference type="ChEBI" id="CHEBI:57783"/>
        <dbReference type="ChEBI" id="CHEBI:58349"/>
        <dbReference type="ChEBI" id="CHEBI:194020"/>
        <dbReference type="ChEBI" id="CHEBI:194025"/>
    </reaction>
    <physiologicalReaction direction="left-to-right" evidence="2">
        <dbReference type="Rhea" id="RHEA:76580"/>
    </physiologicalReaction>
</comment>
<comment type="catalytic activity">
    <reaction evidence="2">
        <text>(2S)-5,5-dimethyl-2,3,4,5-tetrahydropyridine-2,6-dicarboxylate + NADH + 2 H(+) = (6S)-3,3-dimethylpiperidine-2,6-dicarboxylate + NAD(+)</text>
        <dbReference type="Rhea" id="RHEA:76583"/>
        <dbReference type="ChEBI" id="CHEBI:15378"/>
        <dbReference type="ChEBI" id="CHEBI:57540"/>
        <dbReference type="ChEBI" id="CHEBI:57945"/>
        <dbReference type="ChEBI" id="CHEBI:194020"/>
        <dbReference type="ChEBI" id="CHEBI:194025"/>
    </reaction>
    <physiologicalReaction direction="left-to-right" evidence="2">
        <dbReference type="Rhea" id="RHEA:76584"/>
    </physiologicalReaction>
</comment>
<comment type="pathway">
    <text evidence="2">Secondary metabolite biosynthesis; terpenoid biosynthesis.</text>
</comment>
<comment type="similarity">
    <text evidence="4">Belongs to the NmrA-type oxidoreductase family.</text>
</comment>
<reference key="1">
    <citation type="journal article" date="2015" name="Genome Announc.">
        <title>Genome sequence of Aspergillus flavus NRRL 3357, a strain that causes aflatoxin contamination of food and feed.</title>
        <authorList>
            <person name="Nierman W.C."/>
            <person name="Yu J."/>
            <person name="Fedorova-Abrams N.D."/>
            <person name="Losada L."/>
            <person name="Cleveland T.E."/>
            <person name="Bhatnagar D."/>
            <person name="Bennett J.W."/>
            <person name="Dean R."/>
            <person name="Payne G.A."/>
        </authorList>
    </citation>
    <scope>NUCLEOTIDE SEQUENCE [LARGE SCALE GENOMIC DNA]</scope>
    <source>
        <strain>ATCC 200026 / FGSC A1120 / IAM 13836 / NRRL 3357 / JCM 12722 / SRRC 167</strain>
    </source>
</reference>
<reference key="2">
    <citation type="journal article" date="2020" name="J. Am. Chem. Soc.">
        <title>Genome mining of alkaloidal terpenoids from a hybrid terpene and nonribosomal peptide biosynthetic pathway.</title>
        <authorList>
            <person name="Yee D.A."/>
            <person name="Kakule T.B."/>
            <person name="Cheng W."/>
            <person name="Chen M."/>
            <person name="Chong C.T.Y."/>
            <person name="Hai Y."/>
            <person name="Hang L.F."/>
            <person name="Hung Y.S."/>
            <person name="Liu N."/>
            <person name="Ohashi M."/>
            <person name="Okorafor I.C."/>
            <person name="Song Y."/>
            <person name="Tang M."/>
            <person name="Zhang Z."/>
            <person name="Tang Y."/>
        </authorList>
    </citation>
    <scope>FUNCTION</scope>
    <scope>CATALYTIC ACTIVITY</scope>
    <scope>PATHWAY</scope>
</reference>
<evidence type="ECO:0000250" key="1">
    <source>
        <dbReference type="UniProtKB" id="Q9HBL8"/>
    </source>
</evidence>
<evidence type="ECO:0000269" key="2">
    <source>
    </source>
</evidence>
<evidence type="ECO:0000303" key="3">
    <source>
    </source>
</evidence>
<evidence type="ECO:0000305" key="4"/>
<name>FLVB_ASPFN</name>
<feature type="chain" id="PRO_0000454478" description="NmrA-like family domain-containing oxidoreductase flvB">
    <location>
        <begin position="1"/>
        <end position="307"/>
    </location>
</feature>
<feature type="binding site" evidence="1">
    <location>
        <begin position="4"/>
        <end position="9"/>
    </location>
    <ligand>
        <name>NADP(+)</name>
        <dbReference type="ChEBI" id="CHEBI:58349"/>
    </ligand>
</feature>
<feature type="binding site" evidence="1">
    <location>
        <begin position="32"/>
        <end position="36"/>
    </location>
    <ligand>
        <name>NADP(+)</name>
        <dbReference type="ChEBI" id="CHEBI:58349"/>
    </ligand>
</feature>
<feature type="binding site" evidence="1">
    <location>
        <begin position="53"/>
        <end position="54"/>
    </location>
    <ligand>
        <name>NADP(+)</name>
        <dbReference type="ChEBI" id="CHEBI:58349"/>
    </ligand>
</feature>
<feature type="binding site" evidence="1">
    <location>
        <begin position="74"/>
        <end position="76"/>
    </location>
    <ligand>
        <name>NADP(+)</name>
        <dbReference type="ChEBI" id="CHEBI:58349"/>
    </ligand>
</feature>
<feature type="binding site" evidence="1">
    <location>
        <begin position="148"/>
        <end position="151"/>
    </location>
    <ligand>
        <name>NADP(+)</name>
        <dbReference type="ChEBI" id="CHEBI:58349"/>
    </ligand>
</feature>
<organism>
    <name type="scientific">Aspergillus flavus (strain ATCC 200026 / FGSC A1120 / IAM 13836 / NRRL 3357 / JCM 12722 / SRRC 167)</name>
    <dbReference type="NCBI Taxonomy" id="332952"/>
    <lineage>
        <taxon>Eukaryota</taxon>
        <taxon>Fungi</taxon>
        <taxon>Dikarya</taxon>
        <taxon>Ascomycota</taxon>
        <taxon>Pezizomycotina</taxon>
        <taxon>Eurotiomycetes</taxon>
        <taxon>Eurotiomycetidae</taxon>
        <taxon>Eurotiales</taxon>
        <taxon>Aspergillaceae</taxon>
        <taxon>Aspergillus</taxon>
        <taxon>Aspergillus subgen. Circumdati</taxon>
    </lineage>
</organism>
<accession>B8NHD7</accession>
<dbReference type="EC" id="1.-.-.-" evidence="2"/>
<dbReference type="EMBL" id="EQ963478">
    <property type="protein sequence ID" value="EED50779.1"/>
    <property type="molecule type" value="Genomic_DNA"/>
</dbReference>
<dbReference type="RefSeq" id="XP_002379555.1">
    <property type="nucleotide sequence ID" value="XM_002379514.1"/>
</dbReference>
<dbReference type="SMR" id="B8NHD7"/>
<dbReference type="EnsemblFungi" id="EED50779">
    <property type="protein sequence ID" value="EED50779"/>
    <property type="gene ID" value="AFLA_135420"/>
</dbReference>
<dbReference type="VEuPathDB" id="FungiDB:AFLA_005896"/>
<dbReference type="eggNOG" id="ENOG502S5T1">
    <property type="taxonomic scope" value="Eukaryota"/>
</dbReference>
<dbReference type="HOGENOM" id="CLU_007383_10_4_1"/>
<dbReference type="OMA" id="RDHWHTE"/>
<dbReference type="UniPathway" id="UPA00213"/>
<dbReference type="GO" id="GO:0016491">
    <property type="term" value="F:oxidoreductase activity"/>
    <property type="evidence" value="ECO:0007669"/>
    <property type="project" value="UniProtKB-KW"/>
</dbReference>
<dbReference type="GO" id="GO:0016114">
    <property type="term" value="P:terpenoid biosynthetic process"/>
    <property type="evidence" value="ECO:0007669"/>
    <property type="project" value="UniProtKB-UniPathway"/>
</dbReference>
<dbReference type="Gene3D" id="3.40.50.720">
    <property type="entry name" value="NAD(P)-binding Rossmann-like Domain"/>
    <property type="match status" value="1"/>
</dbReference>
<dbReference type="Gene3D" id="3.90.25.10">
    <property type="entry name" value="UDP-galactose 4-epimerase, domain 1"/>
    <property type="match status" value="1"/>
</dbReference>
<dbReference type="InterPro" id="IPR036291">
    <property type="entry name" value="NAD(P)-bd_dom_sf"/>
</dbReference>
<dbReference type="InterPro" id="IPR008030">
    <property type="entry name" value="NmrA-like"/>
</dbReference>
<dbReference type="InterPro" id="IPR052718">
    <property type="entry name" value="NmrA-type_oxidoreductase"/>
</dbReference>
<dbReference type="PANTHER" id="PTHR47129:SF1">
    <property type="entry name" value="NMRA-LIKE DOMAIN-CONTAINING PROTEIN"/>
    <property type="match status" value="1"/>
</dbReference>
<dbReference type="PANTHER" id="PTHR47129">
    <property type="entry name" value="QUINONE OXIDOREDUCTASE 2"/>
    <property type="match status" value="1"/>
</dbReference>
<dbReference type="Pfam" id="PF05368">
    <property type="entry name" value="NmrA"/>
    <property type="match status" value="1"/>
</dbReference>
<dbReference type="SUPFAM" id="SSF51735">
    <property type="entry name" value="NAD(P)-binding Rossmann-fold domains"/>
    <property type="match status" value="1"/>
</dbReference>
<sequence length="307" mass="34563">MRYLITGATGGLGGHILEYFIAQIPFSDFAASSSSPENRSRFESRGVNFRHLDYENPTTLNRALHDVENLLFISTNANVIDVEKVKRQHRNVVEAARKANVKHVWYTSLPFGGLTNDSEVSVQRAHLATEKMLKESGLTFTCIREGIYVEGFPLFLNWYPETTLLTLPRDGEIAFTSRVELAVCTARLMIQGGFENRIVLLTAGETITAKELVSVINETTGRRVELRYVSPDEFVDAGPRNDRGGKSRAFFETLVSLWESAASGELRTMDGLMAEILGRDPIPPRDAVRQLLVENRDHTWHQMYAKK</sequence>